<accession>B1VUF9</accession>
<gene>
    <name evidence="1" type="primary">rsmA</name>
    <name evidence="1" type="synonym">ksgA</name>
    <name type="ordered locus">SGR_4356</name>
</gene>
<keyword id="KW-0963">Cytoplasm</keyword>
<keyword id="KW-0489">Methyltransferase</keyword>
<keyword id="KW-0694">RNA-binding</keyword>
<keyword id="KW-0698">rRNA processing</keyword>
<keyword id="KW-0949">S-adenosyl-L-methionine</keyword>
<keyword id="KW-0808">Transferase</keyword>
<sequence length="291" mass="30705">MSSTEPDALLGPADIRDLAATLGVRPTKQRGQNFVIDANTVRRIVRTAEVRPDDTVVEVGPGLGSLTLALLEAADRVVAVEIDDVLAAALPATVQARMPERADRFALVHSDAMLVTELPGPAPTALVANLPYNVAVPVLLTMLERFPSIERTLVMVQSEVADRLAARPGNKVYGVPSVKANWYADVKRAGAIGRNVFWPAPNVDSGLVSLVRRTEPIATTASRAEVFAVVDAAFAQRRKTLRAALSGWAGSAPAAEAALVAAGISPQARGEALTVEEFAAIAEHKPEVSSL</sequence>
<evidence type="ECO:0000255" key="1">
    <source>
        <dbReference type="HAMAP-Rule" id="MF_00607"/>
    </source>
</evidence>
<proteinExistence type="inferred from homology"/>
<feature type="chain" id="PRO_1000130325" description="Ribosomal RNA small subunit methyltransferase A">
    <location>
        <begin position="1"/>
        <end position="291"/>
    </location>
</feature>
<feature type="binding site" evidence="1">
    <location>
        <position position="33"/>
    </location>
    <ligand>
        <name>S-adenosyl-L-methionine</name>
        <dbReference type="ChEBI" id="CHEBI:59789"/>
    </ligand>
</feature>
<feature type="binding site" evidence="1">
    <location>
        <position position="35"/>
    </location>
    <ligand>
        <name>S-adenosyl-L-methionine</name>
        <dbReference type="ChEBI" id="CHEBI:59789"/>
    </ligand>
</feature>
<feature type="binding site" evidence="1">
    <location>
        <position position="60"/>
    </location>
    <ligand>
        <name>S-adenosyl-L-methionine</name>
        <dbReference type="ChEBI" id="CHEBI:59789"/>
    </ligand>
</feature>
<feature type="binding site" evidence="1">
    <location>
        <position position="81"/>
    </location>
    <ligand>
        <name>S-adenosyl-L-methionine</name>
        <dbReference type="ChEBI" id="CHEBI:59789"/>
    </ligand>
</feature>
<feature type="binding site" evidence="1">
    <location>
        <position position="111"/>
    </location>
    <ligand>
        <name>S-adenosyl-L-methionine</name>
        <dbReference type="ChEBI" id="CHEBI:59789"/>
    </ligand>
</feature>
<feature type="binding site" evidence="1">
    <location>
        <position position="129"/>
    </location>
    <ligand>
        <name>S-adenosyl-L-methionine</name>
        <dbReference type="ChEBI" id="CHEBI:59789"/>
    </ligand>
</feature>
<organism>
    <name type="scientific">Streptomyces griseus subsp. griseus (strain JCM 4626 / CBS 651.72 / NBRC 13350 / KCC S-0626 / ISP 5235)</name>
    <dbReference type="NCBI Taxonomy" id="455632"/>
    <lineage>
        <taxon>Bacteria</taxon>
        <taxon>Bacillati</taxon>
        <taxon>Actinomycetota</taxon>
        <taxon>Actinomycetes</taxon>
        <taxon>Kitasatosporales</taxon>
        <taxon>Streptomycetaceae</taxon>
        <taxon>Streptomyces</taxon>
    </lineage>
</organism>
<protein>
    <recommendedName>
        <fullName evidence="1">Ribosomal RNA small subunit methyltransferase A</fullName>
        <ecNumber evidence="1">2.1.1.182</ecNumber>
    </recommendedName>
    <alternativeName>
        <fullName evidence="1">16S rRNA (adenine(1518)-N(6)/adenine(1519)-N(6))-dimethyltransferase</fullName>
    </alternativeName>
    <alternativeName>
        <fullName evidence="1">16S rRNA dimethyladenosine transferase</fullName>
    </alternativeName>
    <alternativeName>
        <fullName evidence="1">16S rRNA dimethylase</fullName>
    </alternativeName>
    <alternativeName>
        <fullName evidence="1">S-adenosylmethionine-6-N', N'-adenosyl(rRNA) dimethyltransferase</fullName>
    </alternativeName>
</protein>
<dbReference type="EC" id="2.1.1.182" evidence="1"/>
<dbReference type="EMBL" id="AP009493">
    <property type="protein sequence ID" value="BAG21185.1"/>
    <property type="molecule type" value="Genomic_DNA"/>
</dbReference>
<dbReference type="RefSeq" id="WP_003968558.1">
    <property type="nucleotide sequence ID" value="NC_010572.1"/>
</dbReference>
<dbReference type="SMR" id="B1VUF9"/>
<dbReference type="KEGG" id="sgr:SGR_4356"/>
<dbReference type="eggNOG" id="COG0030">
    <property type="taxonomic scope" value="Bacteria"/>
</dbReference>
<dbReference type="HOGENOM" id="CLU_041220_1_1_11"/>
<dbReference type="Proteomes" id="UP000001685">
    <property type="component" value="Chromosome"/>
</dbReference>
<dbReference type="GO" id="GO:0005829">
    <property type="term" value="C:cytosol"/>
    <property type="evidence" value="ECO:0007669"/>
    <property type="project" value="TreeGrafter"/>
</dbReference>
<dbReference type="GO" id="GO:0052908">
    <property type="term" value="F:16S rRNA (adenine(1518)-N(6)/adenine(1519)-N(6))-dimethyltransferase activity"/>
    <property type="evidence" value="ECO:0007669"/>
    <property type="project" value="UniProtKB-EC"/>
</dbReference>
<dbReference type="GO" id="GO:0003723">
    <property type="term" value="F:RNA binding"/>
    <property type="evidence" value="ECO:0007669"/>
    <property type="project" value="UniProtKB-KW"/>
</dbReference>
<dbReference type="CDD" id="cd02440">
    <property type="entry name" value="AdoMet_MTases"/>
    <property type="match status" value="1"/>
</dbReference>
<dbReference type="FunFam" id="1.10.8.100:FF:000003">
    <property type="entry name" value="Ribosomal RNA small subunit methyltransferase A"/>
    <property type="match status" value="1"/>
</dbReference>
<dbReference type="FunFam" id="3.40.50.150:FF:000023">
    <property type="entry name" value="Ribosomal RNA small subunit methyltransferase A"/>
    <property type="match status" value="1"/>
</dbReference>
<dbReference type="Gene3D" id="1.10.8.100">
    <property type="entry name" value="Ribosomal RNA adenine dimethylase-like, domain 2"/>
    <property type="match status" value="1"/>
</dbReference>
<dbReference type="Gene3D" id="3.40.50.150">
    <property type="entry name" value="Vaccinia Virus protein VP39"/>
    <property type="match status" value="1"/>
</dbReference>
<dbReference type="HAMAP" id="MF_00607">
    <property type="entry name" value="16SrRNA_methyltr_A"/>
    <property type="match status" value="1"/>
</dbReference>
<dbReference type="InterPro" id="IPR001737">
    <property type="entry name" value="KsgA/Erm"/>
</dbReference>
<dbReference type="InterPro" id="IPR023165">
    <property type="entry name" value="rRNA_Ade_diMease-like_C"/>
</dbReference>
<dbReference type="InterPro" id="IPR020596">
    <property type="entry name" value="rRNA_Ade_Mease_Trfase_CS"/>
</dbReference>
<dbReference type="InterPro" id="IPR020598">
    <property type="entry name" value="rRNA_Ade_methylase_Trfase_N"/>
</dbReference>
<dbReference type="InterPro" id="IPR011530">
    <property type="entry name" value="rRNA_adenine_dimethylase"/>
</dbReference>
<dbReference type="InterPro" id="IPR029063">
    <property type="entry name" value="SAM-dependent_MTases_sf"/>
</dbReference>
<dbReference type="NCBIfam" id="TIGR00755">
    <property type="entry name" value="ksgA"/>
    <property type="match status" value="1"/>
</dbReference>
<dbReference type="PANTHER" id="PTHR11727">
    <property type="entry name" value="DIMETHYLADENOSINE TRANSFERASE"/>
    <property type="match status" value="1"/>
</dbReference>
<dbReference type="PANTHER" id="PTHR11727:SF7">
    <property type="entry name" value="DIMETHYLADENOSINE TRANSFERASE-RELATED"/>
    <property type="match status" value="1"/>
</dbReference>
<dbReference type="Pfam" id="PF00398">
    <property type="entry name" value="RrnaAD"/>
    <property type="match status" value="1"/>
</dbReference>
<dbReference type="SMART" id="SM00650">
    <property type="entry name" value="rADc"/>
    <property type="match status" value="1"/>
</dbReference>
<dbReference type="SUPFAM" id="SSF53335">
    <property type="entry name" value="S-adenosyl-L-methionine-dependent methyltransferases"/>
    <property type="match status" value="1"/>
</dbReference>
<dbReference type="PROSITE" id="PS01131">
    <property type="entry name" value="RRNA_A_DIMETH"/>
    <property type="match status" value="1"/>
</dbReference>
<dbReference type="PROSITE" id="PS51689">
    <property type="entry name" value="SAM_RNA_A_N6_MT"/>
    <property type="match status" value="1"/>
</dbReference>
<name>RSMA_STRGG</name>
<comment type="function">
    <text evidence="1">Specifically dimethylates two adjacent adenosines (A1518 and A1519) in the loop of a conserved hairpin near the 3'-end of 16S rRNA in the 30S particle. May play a critical role in biogenesis of 30S subunits.</text>
</comment>
<comment type="catalytic activity">
    <reaction evidence="1">
        <text>adenosine(1518)/adenosine(1519) in 16S rRNA + 4 S-adenosyl-L-methionine = N(6)-dimethyladenosine(1518)/N(6)-dimethyladenosine(1519) in 16S rRNA + 4 S-adenosyl-L-homocysteine + 4 H(+)</text>
        <dbReference type="Rhea" id="RHEA:19609"/>
        <dbReference type="Rhea" id="RHEA-COMP:10232"/>
        <dbReference type="Rhea" id="RHEA-COMP:10233"/>
        <dbReference type="ChEBI" id="CHEBI:15378"/>
        <dbReference type="ChEBI" id="CHEBI:57856"/>
        <dbReference type="ChEBI" id="CHEBI:59789"/>
        <dbReference type="ChEBI" id="CHEBI:74411"/>
        <dbReference type="ChEBI" id="CHEBI:74493"/>
        <dbReference type="EC" id="2.1.1.182"/>
    </reaction>
</comment>
<comment type="subcellular location">
    <subcellularLocation>
        <location evidence="1">Cytoplasm</location>
    </subcellularLocation>
</comment>
<comment type="similarity">
    <text evidence="1">Belongs to the class I-like SAM-binding methyltransferase superfamily. rRNA adenine N(6)-methyltransferase family. RsmA subfamily.</text>
</comment>
<reference key="1">
    <citation type="journal article" date="2008" name="J. Bacteriol.">
        <title>Genome sequence of the streptomycin-producing microorganism Streptomyces griseus IFO 13350.</title>
        <authorList>
            <person name="Ohnishi Y."/>
            <person name="Ishikawa J."/>
            <person name="Hara H."/>
            <person name="Suzuki H."/>
            <person name="Ikenoya M."/>
            <person name="Ikeda H."/>
            <person name="Yamashita A."/>
            <person name="Hattori M."/>
            <person name="Horinouchi S."/>
        </authorList>
    </citation>
    <scope>NUCLEOTIDE SEQUENCE [LARGE SCALE GENOMIC DNA]</scope>
    <source>
        <strain>JCM 4626 / CBS 651.72 / NBRC 13350 / KCC S-0626 / ISP 5235</strain>
    </source>
</reference>